<sequence>MAKANEHFFYVLKCNDNSYYGGYTTDVTRREAEHNAGIRCKYTKTRRPVKVIHFEKFETRSEATKAEAAFKKLSRKNKDSYLIEREEDSE</sequence>
<comment type="similarity">
    <text evidence="2">Belongs to the UPF0213 family.</text>
</comment>
<evidence type="ECO:0000255" key="1">
    <source>
        <dbReference type="PROSITE-ProRule" id="PRU00977"/>
    </source>
</evidence>
<evidence type="ECO:0000305" key="2"/>
<proteinExistence type="inferred from homology"/>
<gene>
    <name type="ordered locus">lwe0147</name>
</gene>
<protein>
    <recommendedName>
        <fullName>UPF0213 protein lwe0147</fullName>
    </recommendedName>
</protein>
<accession>A0AEY3</accession>
<reference key="1">
    <citation type="journal article" date="2006" name="J. Bacteriol.">
        <title>Whole-genome sequence of Listeria welshimeri reveals common steps in genome reduction with Listeria innocua as compared to Listeria monocytogenes.</title>
        <authorList>
            <person name="Hain T."/>
            <person name="Steinweg C."/>
            <person name="Kuenne C.T."/>
            <person name="Billion A."/>
            <person name="Ghai R."/>
            <person name="Chatterjee S.S."/>
            <person name="Domann E."/>
            <person name="Kaerst U."/>
            <person name="Goesmann A."/>
            <person name="Bekel T."/>
            <person name="Bartels D."/>
            <person name="Kaiser O."/>
            <person name="Meyer F."/>
            <person name="Puehler A."/>
            <person name="Weisshaar B."/>
            <person name="Wehland J."/>
            <person name="Liang C."/>
            <person name="Dandekar T."/>
            <person name="Lampidis R."/>
            <person name="Kreft J."/>
            <person name="Goebel W."/>
            <person name="Chakraborty T."/>
        </authorList>
    </citation>
    <scope>NUCLEOTIDE SEQUENCE [LARGE SCALE GENOMIC DNA]</scope>
    <source>
        <strain>ATCC 35897 / DSM 20650 / CCUG 15529 / CIP 8149 / NCTC 11857 / SLCC 5334 / V8</strain>
    </source>
</reference>
<name>Y147_LISW6</name>
<dbReference type="EMBL" id="AM263198">
    <property type="protein sequence ID" value="CAK19565.1"/>
    <property type="molecule type" value="Genomic_DNA"/>
</dbReference>
<dbReference type="RefSeq" id="WP_011701016.1">
    <property type="nucleotide sequence ID" value="NC_008555.1"/>
</dbReference>
<dbReference type="SMR" id="A0AEY3"/>
<dbReference type="STRING" id="386043.lwe0147"/>
<dbReference type="GeneID" id="61188027"/>
<dbReference type="KEGG" id="lwe:lwe0147"/>
<dbReference type="eggNOG" id="COG2827">
    <property type="taxonomic scope" value="Bacteria"/>
</dbReference>
<dbReference type="HOGENOM" id="CLU_135650_0_3_9"/>
<dbReference type="OrthoDB" id="9807770at2"/>
<dbReference type="Proteomes" id="UP000000779">
    <property type="component" value="Chromosome"/>
</dbReference>
<dbReference type="CDD" id="cd10456">
    <property type="entry name" value="GIY-YIG_UPF0213"/>
    <property type="match status" value="1"/>
</dbReference>
<dbReference type="Gene3D" id="3.40.1440.10">
    <property type="entry name" value="GIY-YIG endonuclease"/>
    <property type="match status" value="1"/>
</dbReference>
<dbReference type="InterPro" id="IPR000305">
    <property type="entry name" value="GIY-YIG_endonuc"/>
</dbReference>
<dbReference type="InterPro" id="IPR035901">
    <property type="entry name" value="GIY-YIG_endonuc_sf"/>
</dbReference>
<dbReference type="InterPro" id="IPR050190">
    <property type="entry name" value="UPF0213_domain"/>
</dbReference>
<dbReference type="PANTHER" id="PTHR34477">
    <property type="entry name" value="UPF0213 PROTEIN YHBQ"/>
    <property type="match status" value="1"/>
</dbReference>
<dbReference type="PANTHER" id="PTHR34477:SF1">
    <property type="entry name" value="UPF0213 PROTEIN YHBQ"/>
    <property type="match status" value="1"/>
</dbReference>
<dbReference type="Pfam" id="PF01541">
    <property type="entry name" value="GIY-YIG"/>
    <property type="match status" value="1"/>
</dbReference>
<dbReference type="SUPFAM" id="SSF82771">
    <property type="entry name" value="GIY-YIG endonuclease"/>
    <property type="match status" value="1"/>
</dbReference>
<dbReference type="PROSITE" id="PS50164">
    <property type="entry name" value="GIY_YIG"/>
    <property type="match status" value="1"/>
</dbReference>
<feature type="chain" id="PRO_1000063673" description="UPF0213 protein lwe0147">
    <location>
        <begin position="1"/>
        <end position="90"/>
    </location>
</feature>
<feature type="domain" description="GIY-YIG" evidence="1">
    <location>
        <begin position="5"/>
        <end position="83"/>
    </location>
</feature>
<organism>
    <name type="scientific">Listeria welshimeri serovar 6b (strain ATCC 35897 / DSM 20650 / CCUG 15529 / CIP 8149 / NCTC 11857 / SLCC 5334 / V8)</name>
    <dbReference type="NCBI Taxonomy" id="386043"/>
    <lineage>
        <taxon>Bacteria</taxon>
        <taxon>Bacillati</taxon>
        <taxon>Bacillota</taxon>
        <taxon>Bacilli</taxon>
        <taxon>Bacillales</taxon>
        <taxon>Listeriaceae</taxon>
        <taxon>Listeria</taxon>
    </lineage>
</organism>